<organism>
    <name type="scientific">Pseudomonas aeruginosa (strain ATCC 15692 / DSM 22644 / CIP 104116 / JCM 14847 / LMG 12228 / 1C / PRS 101 / PAO1)</name>
    <dbReference type="NCBI Taxonomy" id="208964"/>
    <lineage>
        <taxon>Bacteria</taxon>
        <taxon>Pseudomonadati</taxon>
        <taxon>Pseudomonadota</taxon>
        <taxon>Gammaproteobacteria</taxon>
        <taxon>Pseudomonadales</taxon>
        <taxon>Pseudomonadaceae</taxon>
        <taxon>Pseudomonas</taxon>
    </lineage>
</organism>
<feature type="chain" id="PRO_0000190366" description="Recombination protein RecR">
    <location>
        <begin position="1"/>
        <end position="198"/>
    </location>
</feature>
<feature type="domain" description="Toprim" evidence="1">
    <location>
        <begin position="80"/>
        <end position="174"/>
    </location>
</feature>
<feature type="zinc finger region" description="C4-type" evidence="1">
    <location>
        <begin position="57"/>
        <end position="72"/>
    </location>
</feature>
<feature type="helix" evidence="2">
    <location>
        <begin position="5"/>
        <end position="14"/>
    </location>
</feature>
<feature type="helix" evidence="2">
    <location>
        <begin position="22"/>
        <end position="35"/>
    </location>
</feature>
<feature type="helix" evidence="2">
    <location>
        <begin position="37"/>
        <end position="53"/>
    </location>
</feature>
<feature type="turn" evidence="2">
    <location>
        <begin position="58"/>
        <end position="60"/>
    </location>
</feature>
<feature type="strand" evidence="2">
    <location>
        <begin position="63"/>
        <end position="68"/>
    </location>
</feature>
<feature type="helix" evidence="2">
    <location>
        <begin position="70"/>
        <end position="73"/>
    </location>
</feature>
<feature type="strand" evidence="2">
    <location>
        <begin position="81"/>
        <end position="87"/>
    </location>
</feature>
<feature type="helix" evidence="2">
    <location>
        <begin position="88"/>
        <end position="95"/>
    </location>
</feature>
<feature type="turn" evidence="2">
    <location>
        <begin position="96"/>
        <end position="98"/>
    </location>
</feature>
<feature type="strand" evidence="2">
    <location>
        <begin position="101"/>
        <end position="105"/>
    </location>
</feature>
<feature type="helix" evidence="2">
    <location>
        <begin position="112"/>
        <end position="114"/>
    </location>
</feature>
<feature type="helix" evidence="2">
    <location>
        <begin position="118"/>
        <end position="121"/>
    </location>
</feature>
<feature type="helix" evidence="2">
    <location>
        <begin position="123"/>
        <end position="132"/>
    </location>
</feature>
<feature type="strand" evidence="2">
    <location>
        <begin position="136"/>
        <end position="140"/>
    </location>
</feature>
<feature type="helix" evidence="2">
    <location>
        <begin position="146"/>
        <end position="159"/>
    </location>
</feature>
<feature type="strand" evidence="2">
    <location>
        <begin position="165"/>
        <end position="168"/>
    </location>
</feature>
<feature type="helix" evidence="2">
    <location>
        <begin position="179"/>
        <end position="181"/>
    </location>
</feature>
<feature type="helix" evidence="2">
    <location>
        <begin position="184"/>
        <end position="192"/>
    </location>
</feature>
<sequence length="198" mass="21173">MSFSPLIRQLIESLRILPGVGQKSAQRMALMLLERDRSGGLKLAQALTAAMEGVGHCRQCRTLSEEELCPQCADPRRDDSLLCVVEGPLDVFAVEQTGYRGRYFVLKGHLSPLDGLGPEAIGIPELEARIRDGAFSEVILATNPTVEGEATAHYIAQLLAGRGLTLSRIAHGVPLGGELELVDGGTLAHALAGRRPIS</sequence>
<name>RECR_PSEAE</name>
<protein>
    <recommendedName>
        <fullName evidence="1">Recombination protein RecR</fullName>
    </recommendedName>
</protein>
<reference key="1">
    <citation type="journal article" date="2000" name="Nature">
        <title>Complete genome sequence of Pseudomonas aeruginosa PAO1, an opportunistic pathogen.</title>
        <authorList>
            <person name="Stover C.K."/>
            <person name="Pham X.-Q.T."/>
            <person name="Erwin A.L."/>
            <person name="Mizoguchi S.D."/>
            <person name="Warrener P."/>
            <person name="Hickey M.J."/>
            <person name="Brinkman F.S.L."/>
            <person name="Hufnagle W.O."/>
            <person name="Kowalik D.J."/>
            <person name="Lagrou M."/>
            <person name="Garber R.L."/>
            <person name="Goltry L."/>
            <person name="Tolentino E."/>
            <person name="Westbrock-Wadman S."/>
            <person name="Yuan Y."/>
            <person name="Brody L.L."/>
            <person name="Coulter S.N."/>
            <person name="Folger K.R."/>
            <person name="Kas A."/>
            <person name="Larbig K."/>
            <person name="Lim R.M."/>
            <person name="Smith K.A."/>
            <person name="Spencer D.H."/>
            <person name="Wong G.K.-S."/>
            <person name="Wu Z."/>
            <person name="Paulsen I.T."/>
            <person name="Reizer J."/>
            <person name="Saier M.H. Jr."/>
            <person name="Hancock R.E.W."/>
            <person name="Lory S."/>
            <person name="Olson M.V."/>
        </authorList>
    </citation>
    <scope>NUCLEOTIDE SEQUENCE [LARGE SCALE GENOMIC DNA]</scope>
    <source>
        <strain>ATCC 15692 / DSM 22644 / CIP 104116 / JCM 14847 / LMG 12228 / 1C / PRS 101 / PAO1</strain>
    </source>
</reference>
<gene>
    <name evidence="1" type="primary">recR</name>
    <name type="ordered locus">PA1534</name>
</gene>
<evidence type="ECO:0000255" key="1">
    <source>
        <dbReference type="HAMAP-Rule" id="MF_00017"/>
    </source>
</evidence>
<evidence type="ECO:0007829" key="2">
    <source>
        <dbReference type="PDB" id="5Z2V"/>
    </source>
</evidence>
<dbReference type="EMBL" id="AE004091">
    <property type="protein sequence ID" value="AAG04923.1"/>
    <property type="molecule type" value="Genomic_DNA"/>
</dbReference>
<dbReference type="PIR" id="E83452">
    <property type="entry name" value="E83452"/>
</dbReference>
<dbReference type="RefSeq" id="NP_250225.1">
    <property type="nucleotide sequence ID" value="NC_002516.2"/>
</dbReference>
<dbReference type="RefSeq" id="WP_003087237.1">
    <property type="nucleotide sequence ID" value="NZ_QZGE01000032.1"/>
</dbReference>
<dbReference type="PDB" id="5Z2V">
    <property type="method" value="X-ray"/>
    <property type="resolution" value="2.20 A"/>
    <property type="chains" value="A/B=1-198"/>
</dbReference>
<dbReference type="PDBsum" id="5Z2V"/>
<dbReference type="SMR" id="Q9I3H9"/>
<dbReference type="FunCoup" id="Q9I3H9">
    <property type="interactions" value="277"/>
</dbReference>
<dbReference type="STRING" id="208964.PA1534"/>
<dbReference type="PaxDb" id="208964-PA1534"/>
<dbReference type="DNASU" id="879372"/>
<dbReference type="GeneID" id="879372"/>
<dbReference type="KEGG" id="pae:PA1534"/>
<dbReference type="PATRIC" id="fig|208964.12.peg.1587"/>
<dbReference type="PseudoCAP" id="PA1534"/>
<dbReference type="HOGENOM" id="CLU_060739_1_2_6"/>
<dbReference type="InParanoid" id="Q9I3H9"/>
<dbReference type="OrthoDB" id="9802672at2"/>
<dbReference type="PhylomeDB" id="Q9I3H9"/>
<dbReference type="BioCyc" id="PAER208964:G1FZ6-1562-MONOMER"/>
<dbReference type="Proteomes" id="UP000002438">
    <property type="component" value="Chromosome"/>
</dbReference>
<dbReference type="GO" id="GO:0003677">
    <property type="term" value="F:DNA binding"/>
    <property type="evidence" value="ECO:0007669"/>
    <property type="project" value="UniProtKB-UniRule"/>
</dbReference>
<dbReference type="GO" id="GO:0008270">
    <property type="term" value="F:zinc ion binding"/>
    <property type="evidence" value="ECO:0007669"/>
    <property type="project" value="UniProtKB-KW"/>
</dbReference>
<dbReference type="GO" id="GO:0006302">
    <property type="term" value="P:double-strand break repair"/>
    <property type="evidence" value="ECO:0000318"/>
    <property type="project" value="GO_Central"/>
</dbReference>
<dbReference type="GO" id="GO:0000725">
    <property type="term" value="P:recombinational repair"/>
    <property type="evidence" value="ECO:0000318"/>
    <property type="project" value="GO_Central"/>
</dbReference>
<dbReference type="CDD" id="cd01025">
    <property type="entry name" value="TOPRIM_recR"/>
    <property type="match status" value="1"/>
</dbReference>
<dbReference type="Gene3D" id="3.40.1360.10">
    <property type="match status" value="1"/>
</dbReference>
<dbReference type="Gene3D" id="6.10.250.240">
    <property type="match status" value="1"/>
</dbReference>
<dbReference type="Gene3D" id="1.10.8.420">
    <property type="entry name" value="RecR Domain 1"/>
    <property type="match status" value="1"/>
</dbReference>
<dbReference type="HAMAP" id="MF_00017">
    <property type="entry name" value="RecR"/>
    <property type="match status" value="1"/>
</dbReference>
<dbReference type="InterPro" id="IPR000093">
    <property type="entry name" value="DNA_Rcmb_RecR"/>
</dbReference>
<dbReference type="InterPro" id="IPR023627">
    <property type="entry name" value="Rcmb_RecR"/>
</dbReference>
<dbReference type="InterPro" id="IPR015967">
    <property type="entry name" value="Rcmb_RecR_Znf"/>
</dbReference>
<dbReference type="InterPro" id="IPR006171">
    <property type="entry name" value="TOPRIM_dom"/>
</dbReference>
<dbReference type="InterPro" id="IPR034137">
    <property type="entry name" value="TOPRIM_RecR"/>
</dbReference>
<dbReference type="NCBIfam" id="TIGR00615">
    <property type="entry name" value="recR"/>
    <property type="match status" value="1"/>
</dbReference>
<dbReference type="PANTHER" id="PTHR30446">
    <property type="entry name" value="RECOMBINATION PROTEIN RECR"/>
    <property type="match status" value="1"/>
</dbReference>
<dbReference type="PANTHER" id="PTHR30446:SF0">
    <property type="entry name" value="RECOMBINATION PROTEIN RECR"/>
    <property type="match status" value="1"/>
</dbReference>
<dbReference type="Pfam" id="PF21175">
    <property type="entry name" value="RecR_C"/>
    <property type="match status" value="1"/>
</dbReference>
<dbReference type="Pfam" id="PF21176">
    <property type="entry name" value="RecR_HhH"/>
    <property type="match status" value="1"/>
</dbReference>
<dbReference type="Pfam" id="PF02132">
    <property type="entry name" value="RecR_ZnF"/>
    <property type="match status" value="1"/>
</dbReference>
<dbReference type="Pfam" id="PF13662">
    <property type="entry name" value="Toprim_4"/>
    <property type="match status" value="1"/>
</dbReference>
<dbReference type="SMART" id="SM00493">
    <property type="entry name" value="TOPRIM"/>
    <property type="match status" value="1"/>
</dbReference>
<dbReference type="SUPFAM" id="SSF111304">
    <property type="entry name" value="Recombination protein RecR"/>
    <property type="match status" value="1"/>
</dbReference>
<dbReference type="PROSITE" id="PS01300">
    <property type="entry name" value="RECR"/>
    <property type="match status" value="1"/>
</dbReference>
<dbReference type="PROSITE" id="PS50880">
    <property type="entry name" value="TOPRIM"/>
    <property type="match status" value="1"/>
</dbReference>
<proteinExistence type="evidence at protein level"/>
<comment type="function">
    <text evidence="1">May play a role in DNA repair. It seems to be involved in an RecBC-independent recombinational process of DNA repair. It may act with RecF and RecO.</text>
</comment>
<comment type="similarity">
    <text evidence="1">Belongs to the RecR family.</text>
</comment>
<accession>Q9I3H9</accession>
<keyword id="KW-0002">3D-structure</keyword>
<keyword id="KW-0227">DNA damage</keyword>
<keyword id="KW-0233">DNA recombination</keyword>
<keyword id="KW-0234">DNA repair</keyword>
<keyword id="KW-0479">Metal-binding</keyword>
<keyword id="KW-1185">Reference proteome</keyword>
<keyword id="KW-0862">Zinc</keyword>
<keyword id="KW-0863">Zinc-finger</keyword>